<organism>
    <name type="scientific">Methanocaldococcus jannaschii (strain ATCC 43067 / DSM 2661 / JAL-1 / JCM 10045 / NBRC 100440)</name>
    <name type="common">Methanococcus jannaschii</name>
    <dbReference type="NCBI Taxonomy" id="243232"/>
    <lineage>
        <taxon>Archaea</taxon>
        <taxon>Methanobacteriati</taxon>
        <taxon>Methanobacteriota</taxon>
        <taxon>Methanomada group</taxon>
        <taxon>Methanococci</taxon>
        <taxon>Methanococcales</taxon>
        <taxon>Methanocaldococcaceae</taxon>
        <taxon>Methanocaldococcus</taxon>
    </lineage>
</organism>
<feature type="chain" id="PRO_0000107007" description="Uncharacterized protein MJ0732">
    <location>
        <begin position="1"/>
        <end position="393"/>
    </location>
</feature>
<feature type="domain" description="Flavodoxin-like" evidence="1">
    <location>
        <begin position="250"/>
        <end position="389"/>
    </location>
</feature>
<accession>Q58142</accession>
<sequence>MILMVLEIKNGIYWVGVIDWEIRDFHGYGTPYGSTYNSYLIKDKKNVLIDTAKDYMFNELIYGISKFIDPKDLDYIIVNHVEKDHSGCVDKLVEISNATIITNEKGKEHLSLYYDTKDWDFIIVDTGDEINIGDRTLKFIRTPMLHWPDNMLTYCKEEKILFSNDAFGQHIASSERFDYEIGEGIFEHAKDYFANILMPYKMLIPDAIKAVKNLDIELICPSHGVIWKEYINEIIEKYNEWAMNKTKNKAVIVYDTMYNSTKKMAHAIAEGLMEKGVEVKIYRVCETSLSRIMTEILDAKYVLVGSPTVNRNLYPEVGKFLAYMDCIRPLDKIGVAFGSYGWMECATEKIKEIFKNLGFKIVDDECLTVRFAPKEEHLKKCYEFGKRLADIGF</sequence>
<keyword id="KW-1185">Reference proteome</keyword>
<dbReference type="EMBL" id="L77117">
    <property type="protein sequence ID" value="AAB98728.1"/>
    <property type="molecule type" value="Genomic_DNA"/>
</dbReference>
<dbReference type="PIR" id="D64391">
    <property type="entry name" value="D64391"/>
</dbReference>
<dbReference type="SMR" id="Q58142"/>
<dbReference type="FunCoup" id="Q58142">
    <property type="interactions" value="3"/>
</dbReference>
<dbReference type="STRING" id="243232.MJ_0732"/>
<dbReference type="PaxDb" id="243232-MJ_0732"/>
<dbReference type="EnsemblBacteria" id="AAB98728">
    <property type="protein sequence ID" value="AAB98728"/>
    <property type="gene ID" value="MJ_0732"/>
</dbReference>
<dbReference type="KEGG" id="mja:MJ_0732"/>
<dbReference type="eggNOG" id="arCOG00509">
    <property type="taxonomic scope" value="Archaea"/>
</dbReference>
<dbReference type="HOGENOM" id="CLU_017490_0_0_2"/>
<dbReference type="InParanoid" id="Q58142"/>
<dbReference type="PhylomeDB" id="Q58142"/>
<dbReference type="Proteomes" id="UP000000805">
    <property type="component" value="Chromosome"/>
</dbReference>
<dbReference type="GO" id="GO:0009055">
    <property type="term" value="F:electron transfer activity"/>
    <property type="evidence" value="ECO:0007669"/>
    <property type="project" value="InterPro"/>
</dbReference>
<dbReference type="GO" id="GO:0010181">
    <property type="term" value="F:FMN binding"/>
    <property type="evidence" value="ECO:0007669"/>
    <property type="project" value="InterPro"/>
</dbReference>
<dbReference type="GO" id="GO:0046872">
    <property type="term" value="F:metal ion binding"/>
    <property type="evidence" value="ECO:0007669"/>
    <property type="project" value="InterPro"/>
</dbReference>
<dbReference type="GO" id="GO:0016491">
    <property type="term" value="F:oxidoreductase activity"/>
    <property type="evidence" value="ECO:0000318"/>
    <property type="project" value="GO_Central"/>
</dbReference>
<dbReference type="CDD" id="cd07709">
    <property type="entry name" value="flavodiiron_proteins_MBL-fold"/>
    <property type="match status" value="1"/>
</dbReference>
<dbReference type="Gene3D" id="3.40.50.360">
    <property type="match status" value="1"/>
</dbReference>
<dbReference type="Gene3D" id="3.60.15.10">
    <property type="entry name" value="Ribonuclease Z/Hydroxyacylglutathione hydrolase-like"/>
    <property type="match status" value="1"/>
</dbReference>
<dbReference type="InterPro" id="IPR008254">
    <property type="entry name" value="Flavodoxin/NO_synth"/>
</dbReference>
<dbReference type="InterPro" id="IPR029039">
    <property type="entry name" value="Flavoprotein-like_sf"/>
</dbReference>
<dbReference type="InterPro" id="IPR001279">
    <property type="entry name" value="Metallo-B-lactamas"/>
</dbReference>
<dbReference type="InterPro" id="IPR045761">
    <property type="entry name" value="ODP_dom"/>
</dbReference>
<dbReference type="InterPro" id="IPR036866">
    <property type="entry name" value="RibonucZ/Hydroxyglut_hydro"/>
</dbReference>
<dbReference type="InterPro" id="IPR016440">
    <property type="entry name" value="Rubredoxin-O_OxRdtase"/>
</dbReference>
<dbReference type="PANTHER" id="PTHR43717">
    <property type="entry name" value="ANAEROBIC NITRIC OXIDE REDUCTASE FLAVORUBREDOXIN"/>
    <property type="match status" value="1"/>
</dbReference>
<dbReference type="PANTHER" id="PTHR43717:SF1">
    <property type="entry name" value="ANAEROBIC NITRIC OXIDE REDUCTASE FLAVORUBREDOXIN"/>
    <property type="match status" value="1"/>
</dbReference>
<dbReference type="Pfam" id="PF00258">
    <property type="entry name" value="Flavodoxin_1"/>
    <property type="match status" value="1"/>
</dbReference>
<dbReference type="Pfam" id="PF19583">
    <property type="entry name" value="ODP"/>
    <property type="match status" value="1"/>
</dbReference>
<dbReference type="PIRSF" id="PIRSF005243">
    <property type="entry name" value="ROO"/>
    <property type="match status" value="1"/>
</dbReference>
<dbReference type="SMART" id="SM00849">
    <property type="entry name" value="Lactamase_B"/>
    <property type="match status" value="1"/>
</dbReference>
<dbReference type="SUPFAM" id="SSF52218">
    <property type="entry name" value="Flavoproteins"/>
    <property type="match status" value="1"/>
</dbReference>
<dbReference type="SUPFAM" id="SSF56281">
    <property type="entry name" value="Metallo-hydrolase/oxidoreductase"/>
    <property type="match status" value="1"/>
</dbReference>
<dbReference type="PROSITE" id="PS50902">
    <property type="entry name" value="FLAVODOXIN_LIKE"/>
    <property type="match status" value="1"/>
</dbReference>
<gene>
    <name type="ordered locus">MJ0732</name>
</gene>
<evidence type="ECO:0000255" key="1">
    <source>
        <dbReference type="PROSITE-ProRule" id="PRU00088"/>
    </source>
</evidence>
<name>Y732_METJA</name>
<reference key="1">
    <citation type="journal article" date="1996" name="Science">
        <title>Complete genome sequence of the methanogenic archaeon, Methanococcus jannaschii.</title>
        <authorList>
            <person name="Bult C.J."/>
            <person name="White O."/>
            <person name="Olsen G.J."/>
            <person name="Zhou L."/>
            <person name="Fleischmann R.D."/>
            <person name="Sutton G.G."/>
            <person name="Blake J.A."/>
            <person name="FitzGerald L.M."/>
            <person name="Clayton R.A."/>
            <person name="Gocayne J.D."/>
            <person name="Kerlavage A.R."/>
            <person name="Dougherty B.A."/>
            <person name="Tomb J.-F."/>
            <person name="Adams M.D."/>
            <person name="Reich C.I."/>
            <person name="Overbeek R."/>
            <person name="Kirkness E.F."/>
            <person name="Weinstock K.G."/>
            <person name="Merrick J.M."/>
            <person name="Glodek A."/>
            <person name="Scott J.L."/>
            <person name="Geoghagen N.S.M."/>
            <person name="Weidman J.F."/>
            <person name="Fuhrmann J.L."/>
            <person name="Nguyen D."/>
            <person name="Utterback T.R."/>
            <person name="Kelley J.M."/>
            <person name="Peterson J.D."/>
            <person name="Sadow P.W."/>
            <person name="Hanna M.C."/>
            <person name="Cotton M.D."/>
            <person name="Roberts K.M."/>
            <person name="Hurst M.A."/>
            <person name="Kaine B.P."/>
            <person name="Borodovsky M."/>
            <person name="Klenk H.-P."/>
            <person name="Fraser C.M."/>
            <person name="Smith H.O."/>
            <person name="Woese C.R."/>
            <person name="Venter J.C."/>
        </authorList>
    </citation>
    <scope>NUCLEOTIDE SEQUENCE [LARGE SCALE GENOMIC DNA]</scope>
    <source>
        <strain>ATCC 43067 / DSM 2661 / JAL-1 / JCM 10045 / NBRC 100440</strain>
    </source>
</reference>
<proteinExistence type="predicted"/>
<protein>
    <recommendedName>
        <fullName>Uncharacterized protein MJ0732</fullName>
    </recommendedName>
</protein>